<proteinExistence type="inferred from homology"/>
<keyword id="KW-0067">ATP-binding</keyword>
<keyword id="KW-0315">Glutamine amidotransferase</keyword>
<keyword id="KW-0436">Ligase</keyword>
<keyword id="KW-0460">Magnesium</keyword>
<keyword id="KW-0479">Metal-binding</keyword>
<keyword id="KW-0547">Nucleotide-binding</keyword>
<keyword id="KW-0665">Pyrimidine biosynthesis</keyword>
<keyword id="KW-1185">Reference proteome</keyword>
<comment type="function">
    <text evidence="1">Catalyzes the ATP-dependent amination of UTP to CTP with either L-glutamine or ammonia as the source of nitrogen. Regulates intracellular CTP levels through interactions with the four ribonucleotide triphosphates.</text>
</comment>
<comment type="catalytic activity">
    <reaction evidence="1">
        <text>UTP + L-glutamine + ATP + H2O = CTP + L-glutamate + ADP + phosphate + 2 H(+)</text>
        <dbReference type="Rhea" id="RHEA:26426"/>
        <dbReference type="ChEBI" id="CHEBI:15377"/>
        <dbReference type="ChEBI" id="CHEBI:15378"/>
        <dbReference type="ChEBI" id="CHEBI:29985"/>
        <dbReference type="ChEBI" id="CHEBI:30616"/>
        <dbReference type="ChEBI" id="CHEBI:37563"/>
        <dbReference type="ChEBI" id="CHEBI:43474"/>
        <dbReference type="ChEBI" id="CHEBI:46398"/>
        <dbReference type="ChEBI" id="CHEBI:58359"/>
        <dbReference type="ChEBI" id="CHEBI:456216"/>
        <dbReference type="EC" id="6.3.4.2"/>
    </reaction>
</comment>
<comment type="catalytic activity">
    <reaction evidence="1">
        <text>L-glutamine + H2O = L-glutamate + NH4(+)</text>
        <dbReference type="Rhea" id="RHEA:15889"/>
        <dbReference type="ChEBI" id="CHEBI:15377"/>
        <dbReference type="ChEBI" id="CHEBI:28938"/>
        <dbReference type="ChEBI" id="CHEBI:29985"/>
        <dbReference type="ChEBI" id="CHEBI:58359"/>
    </reaction>
</comment>
<comment type="catalytic activity">
    <reaction evidence="1">
        <text>UTP + NH4(+) + ATP = CTP + ADP + phosphate + 2 H(+)</text>
        <dbReference type="Rhea" id="RHEA:16597"/>
        <dbReference type="ChEBI" id="CHEBI:15378"/>
        <dbReference type="ChEBI" id="CHEBI:28938"/>
        <dbReference type="ChEBI" id="CHEBI:30616"/>
        <dbReference type="ChEBI" id="CHEBI:37563"/>
        <dbReference type="ChEBI" id="CHEBI:43474"/>
        <dbReference type="ChEBI" id="CHEBI:46398"/>
        <dbReference type="ChEBI" id="CHEBI:456216"/>
    </reaction>
</comment>
<comment type="activity regulation">
    <text evidence="1">Allosterically activated by GTP, when glutamine is the substrate; GTP has no effect on the reaction when ammonia is the substrate. The allosteric effector GTP functions by stabilizing the protein conformation that binds the tetrahedral intermediate(s) formed during glutamine hydrolysis. Inhibited by the product CTP, via allosteric rather than competitive inhibition.</text>
</comment>
<comment type="pathway">
    <text evidence="1">Pyrimidine metabolism; CTP biosynthesis via de novo pathway; CTP from UDP: step 2/2.</text>
</comment>
<comment type="subunit">
    <text evidence="1">Homotetramer.</text>
</comment>
<comment type="miscellaneous">
    <text evidence="1">CTPSs have evolved a hybrid strategy for distinguishing between UTP and CTP. The overlapping regions of the product feedback inhibitory and substrate sites recognize a common feature in both compounds, the triphosphate moiety. To differentiate isosteric substrate and product pyrimidine rings, an additional pocket far from the expected kinase/ligase catalytic site, specifically recognizes the cytosine and ribose portions of the product inhibitor.</text>
</comment>
<comment type="similarity">
    <text evidence="1">Belongs to the CTP synthase family.</text>
</comment>
<gene>
    <name evidence="1" type="primary">pyrG</name>
    <name type="ordered locus">HEAR2189</name>
</gene>
<sequence>MTKFVFVTGGVVSSLGKGIAAASLAAILESRGLKVTLLKLDPYINVDPGTMSPFQHGEVFVTEDGAETDLDLGHYERFITAKMRKVNNFTTGQIYESVIRKERRGEYLGKTVQVIPHITNEIQDYIYRGAEGFDVALVEIGGTVGDIESLPFLEAARQLSLRAGRNAAAFVHLTLVPYLVSAGELKTKPTQHSVQKLREIGISPDALLCRADRPIPDDERAKISLFSNVPEDAVISVWDADTIYKIPQMLYDQGLDRIVCEKLALSPKPADLSVWTKLVHALENPKHSVTIGMVGKYVDLTESYKSLTEALRHAGIHTESRVNIEYLDSEEIEASGPQCLAKYDAILVPGGFGKRGVEGKIAAARFAREHAIPYFGICLGMQVALIEYARNVAGLTKANSTEFDPDTEQPVVALINEWQNHDGKVERRDLNSDLGGTMRLGSQTCAVKPGTLAAEIYGNEVTERHRHRYEANNHYLGRVEEAGLIVSARTPAESLCEIMELPRTGEHAHPWYVGVQYHPEFNSTPRDGHPLFISFIKAALAHKQAEESKKVT</sequence>
<feature type="chain" id="PRO_1000139472" description="CTP synthase">
    <location>
        <begin position="1"/>
        <end position="552"/>
    </location>
</feature>
<feature type="domain" description="Glutamine amidotransferase type-1" evidence="1">
    <location>
        <begin position="290"/>
        <end position="545"/>
    </location>
</feature>
<feature type="region of interest" description="Amidoligase domain" evidence="1">
    <location>
        <begin position="1"/>
        <end position="265"/>
    </location>
</feature>
<feature type="active site" description="Nucleophile; for glutamine hydrolysis" evidence="1">
    <location>
        <position position="378"/>
    </location>
</feature>
<feature type="active site" evidence="1">
    <location>
        <position position="518"/>
    </location>
</feature>
<feature type="active site" evidence="1">
    <location>
        <position position="520"/>
    </location>
</feature>
<feature type="binding site" evidence="1">
    <location>
        <position position="13"/>
    </location>
    <ligand>
        <name>CTP</name>
        <dbReference type="ChEBI" id="CHEBI:37563"/>
        <note>allosteric inhibitor</note>
    </ligand>
</feature>
<feature type="binding site" evidence="1">
    <location>
        <position position="13"/>
    </location>
    <ligand>
        <name>UTP</name>
        <dbReference type="ChEBI" id="CHEBI:46398"/>
    </ligand>
</feature>
<feature type="binding site" evidence="1">
    <location>
        <begin position="14"/>
        <end position="19"/>
    </location>
    <ligand>
        <name>ATP</name>
        <dbReference type="ChEBI" id="CHEBI:30616"/>
    </ligand>
</feature>
<feature type="binding site" evidence="1">
    <location>
        <position position="71"/>
    </location>
    <ligand>
        <name>ATP</name>
        <dbReference type="ChEBI" id="CHEBI:30616"/>
    </ligand>
</feature>
<feature type="binding site" evidence="1">
    <location>
        <position position="71"/>
    </location>
    <ligand>
        <name>Mg(2+)</name>
        <dbReference type="ChEBI" id="CHEBI:18420"/>
    </ligand>
</feature>
<feature type="binding site" evidence="1">
    <location>
        <position position="139"/>
    </location>
    <ligand>
        <name>Mg(2+)</name>
        <dbReference type="ChEBI" id="CHEBI:18420"/>
    </ligand>
</feature>
<feature type="binding site" evidence="1">
    <location>
        <begin position="146"/>
        <end position="148"/>
    </location>
    <ligand>
        <name>CTP</name>
        <dbReference type="ChEBI" id="CHEBI:37563"/>
        <note>allosteric inhibitor</note>
    </ligand>
</feature>
<feature type="binding site" evidence="1">
    <location>
        <begin position="186"/>
        <end position="191"/>
    </location>
    <ligand>
        <name>CTP</name>
        <dbReference type="ChEBI" id="CHEBI:37563"/>
        <note>allosteric inhibitor</note>
    </ligand>
</feature>
<feature type="binding site" evidence="1">
    <location>
        <begin position="186"/>
        <end position="191"/>
    </location>
    <ligand>
        <name>UTP</name>
        <dbReference type="ChEBI" id="CHEBI:46398"/>
    </ligand>
</feature>
<feature type="binding site" evidence="1">
    <location>
        <position position="222"/>
    </location>
    <ligand>
        <name>CTP</name>
        <dbReference type="ChEBI" id="CHEBI:37563"/>
        <note>allosteric inhibitor</note>
    </ligand>
</feature>
<feature type="binding site" evidence="1">
    <location>
        <position position="222"/>
    </location>
    <ligand>
        <name>UTP</name>
        <dbReference type="ChEBI" id="CHEBI:46398"/>
    </ligand>
</feature>
<feature type="binding site" evidence="1">
    <location>
        <position position="351"/>
    </location>
    <ligand>
        <name>L-glutamine</name>
        <dbReference type="ChEBI" id="CHEBI:58359"/>
    </ligand>
</feature>
<feature type="binding site" evidence="1">
    <location>
        <begin position="379"/>
        <end position="382"/>
    </location>
    <ligand>
        <name>L-glutamine</name>
        <dbReference type="ChEBI" id="CHEBI:58359"/>
    </ligand>
</feature>
<feature type="binding site" evidence="1">
    <location>
        <position position="402"/>
    </location>
    <ligand>
        <name>L-glutamine</name>
        <dbReference type="ChEBI" id="CHEBI:58359"/>
    </ligand>
</feature>
<feature type="binding site" evidence="1">
    <location>
        <position position="468"/>
    </location>
    <ligand>
        <name>L-glutamine</name>
        <dbReference type="ChEBI" id="CHEBI:58359"/>
    </ligand>
</feature>
<evidence type="ECO:0000255" key="1">
    <source>
        <dbReference type="HAMAP-Rule" id="MF_01227"/>
    </source>
</evidence>
<name>PYRG_HERAR</name>
<organism>
    <name type="scientific">Herminiimonas arsenicoxydans</name>
    <dbReference type="NCBI Taxonomy" id="204773"/>
    <lineage>
        <taxon>Bacteria</taxon>
        <taxon>Pseudomonadati</taxon>
        <taxon>Pseudomonadota</taxon>
        <taxon>Betaproteobacteria</taxon>
        <taxon>Burkholderiales</taxon>
        <taxon>Oxalobacteraceae</taxon>
        <taxon>Herminiimonas</taxon>
    </lineage>
</organism>
<accession>A4G738</accession>
<reference key="1">
    <citation type="journal article" date="2007" name="PLoS Genet.">
        <title>A tale of two oxidation states: bacterial colonization of arsenic-rich environments.</title>
        <authorList>
            <person name="Muller D."/>
            <person name="Medigue C."/>
            <person name="Koechler S."/>
            <person name="Barbe V."/>
            <person name="Barakat M."/>
            <person name="Talla E."/>
            <person name="Bonnefoy V."/>
            <person name="Krin E."/>
            <person name="Arsene-Ploetze F."/>
            <person name="Carapito C."/>
            <person name="Chandler M."/>
            <person name="Cournoyer B."/>
            <person name="Cruveiller S."/>
            <person name="Dossat C."/>
            <person name="Duval S."/>
            <person name="Heymann M."/>
            <person name="Leize E."/>
            <person name="Lieutaud A."/>
            <person name="Lievremont D."/>
            <person name="Makita Y."/>
            <person name="Mangenot S."/>
            <person name="Nitschke W."/>
            <person name="Ortet P."/>
            <person name="Perdrial N."/>
            <person name="Schoepp B."/>
            <person name="Siguier P."/>
            <person name="Simeonova D.D."/>
            <person name="Rouy Z."/>
            <person name="Segurens B."/>
            <person name="Turlin E."/>
            <person name="Vallenet D."/>
            <person name="van Dorsselaer A."/>
            <person name="Weiss S."/>
            <person name="Weissenbach J."/>
            <person name="Lett M.-C."/>
            <person name="Danchin A."/>
            <person name="Bertin P.N."/>
        </authorList>
    </citation>
    <scope>NUCLEOTIDE SEQUENCE [LARGE SCALE GENOMIC DNA]</scope>
    <source>
        <strain>ULPAs1</strain>
    </source>
</reference>
<dbReference type="EC" id="6.3.4.2" evidence="1"/>
<dbReference type="EMBL" id="CU207211">
    <property type="protein sequence ID" value="CAL62325.1"/>
    <property type="molecule type" value="Genomic_DNA"/>
</dbReference>
<dbReference type="SMR" id="A4G738"/>
<dbReference type="STRING" id="204773.HEAR2189"/>
<dbReference type="MEROPS" id="C26.964"/>
<dbReference type="KEGG" id="har:HEAR2189"/>
<dbReference type="eggNOG" id="COG0504">
    <property type="taxonomic scope" value="Bacteria"/>
</dbReference>
<dbReference type="HOGENOM" id="CLU_011675_5_0_4"/>
<dbReference type="OrthoDB" id="9801107at2"/>
<dbReference type="UniPathway" id="UPA00159">
    <property type="reaction ID" value="UER00277"/>
</dbReference>
<dbReference type="Proteomes" id="UP000006697">
    <property type="component" value="Chromosome"/>
</dbReference>
<dbReference type="GO" id="GO:0005829">
    <property type="term" value="C:cytosol"/>
    <property type="evidence" value="ECO:0007669"/>
    <property type="project" value="TreeGrafter"/>
</dbReference>
<dbReference type="GO" id="GO:0005524">
    <property type="term" value="F:ATP binding"/>
    <property type="evidence" value="ECO:0007669"/>
    <property type="project" value="UniProtKB-KW"/>
</dbReference>
<dbReference type="GO" id="GO:0003883">
    <property type="term" value="F:CTP synthase activity"/>
    <property type="evidence" value="ECO:0007669"/>
    <property type="project" value="UniProtKB-UniRule"/>
</dbReference>
<dbReference type="GO" id="GO:0004359">
    <property type="term" value="F:glutaminase activity"/>
    <property type="evidence" value="ECO:0007669"/>
    <property type="project" value="RHEA"/>
</dbReference>
<dbReference type="GO" id="GO:0042802">
    <property type="term" value="F:identical protein binding"/>
    <property type="evidence" value="ECO:0007669"/>
    <property type="project" value="TreeGrafter"/>
</dbReference>
<dbReference type="GO" id="GO:0046872">
    <property type="term" value="F:metal ion binding"/>
    <property type="evidence" value="ECO:0007669"/>
    <property type="project" value="UniProtKB-KW"/>
</dbReference>
<dbReference type="GO" id="GO:0044210">
    <property type="term" value="P:'de novo' CTP biosynthetic process"/>
    <property type="evidence" value="ECO:0007669"/>
    <property type="project" value="UniProtKB-UniRule"/>
</dbReference>
<dbReference type="GO" id="GO:0019856">
    <property type="term" value="P:pyrimidine nucleobase biosynthetic process"/>
    <property type="evidence" value="ECO:0007669"/>
    <property type="project" value="TreeGrafter"/>
</dbReference>
<dbReference type="CDD" id="cd03113">
    <property type="entry name" value="CTPS_N"/>
    <property type="match status" value="1"/>
</dbReference>
<dbReference type="CDD" id="cd01746">
    <property type="entry name" value="GATase1_CTP_Synthase"/>
    <property type="match status" value="1"/>
</dbReference>
<dbReference type="FunFam" id="3.40.50.300:FF:000009">
    <property type="entry name" value="CTP synthase"/>
    <property type="match status" value="1"/>
</dbReference>
<dbReference type="FunFam" id="3.40.50.880:FF:000002">
    <property type="entry name" value="CTP synthase"/>
    <property type="match status" value="1"/>
</dbReference>
<dbReference type="Gene3D" id="3.40.50.880">
    <property type="match status" value="1"/>
</dbReference>
<dbReference type="Gene3D" id="3.40.50.300">
    <property type="entry name" value="P-loop containing nucleotide triphosphate hydrolases"/>
    <property type="match status" value="1"/>
</dbReference>
<dbReference type="HAMAP" id="MF_01227">
    <property type="entry name" value="PyrG"/>
    <property type="match status" value="1"/>
</dbReference>
<dbReference type="InterPro" id="IPR029062">
    <property type="entry name" value="Class_I_gatase-like"/>
</dbReference>
<dbReference type="InterPro" id="IPR004468">
    <property type="entry name" value="CTP_synthase"/>
</dbReference>
<dbReference type="InterPro" id="IPR017456">
    <property type="entry name" value="CTP_synthase_N"/>
</dbReference>
<dbReference type="InterPro" id="IPR017926">
    <property type="entry name" value="GATASE"/>
</dbReference>
<dbReference type="InterPro" id="IPR033828">
    <property type="entry name" value="GATase1_CTP_Synthase"/>
</dbReference>
<dbReference type="InterPro" id="IPR027417">
    <property type="entry name" value="P-loop_NTPase"/>
</dbReference>
<dbReference type="NCBIfam" id="NF003792">
    <property type="entry name" value="PRK05380.1"/>
    <property type="match status" value="1"/>
</dbReference>
<dbReference type="NCBIfam" id="TIGR00337">
    <property type="entry name" value="PyrG"/>
    <property type="match status" value="1"/>
</dbReference>
<dbReference type="PANTHER" id="PTHR11550">
    <property type="entry name" value="CTP SYNTHASE"/>
    <property type="match status" value="1"/>
</dbReference>
<dbReference type="PANTHER" id="PTHR11550:SF0">
    <property type="entry name" value="CTP SYNTHASE-RELATED"/>
    <property type="match status" value="1"/>
</dbReference>
<dbReference type="Pfam" id="PF06418">
    <property type="entry name" value="CTP_synth_N"/>
    <property type="match status" value="1"/>
</dbReference>
<dbReference type="Pfam" id="PF00117">
    <property type="entry name" value="GATase"/>
    <property type="match status" value="1"/>
</dbReference>
<dbReference type="SUPFAM" id="SSF52317">
    <property type="entry name" value="Class I glutamine amidotransferase-like"/>
    <property type="match status" value="1"/>
</dbReference>
<dbReference type="SUPFAM" id="SSF52540">
    <property type="entry name" value="P-loop containing nucleoside triphosphate hydrolases"/>
    <property type="match status" value="1"/>
</dbReference>
<dbReference type="PROSITE" id="PS51273">
    <property type="entry name" value="GATASE_TYPE_1"/>
    <property type="match status" value="1"/>
</dbReference>
<protein>
    <recommendedName>
        <fullName evidence="1">CTP synthase</fullName>
        <ecNumber evidence="1">6.3.4.2</ecNumber>
    </recommendedName>
    <alternativeName>
        <fullName evidence="1">Cytidine 5'-triphosphate synthase</fullName>
    </alternativeName>
    <alternativeName>
        <fullName evidence="1">Cytidine triphosphate synthetase</fullName>
        <shortName evidence="1">CTP synthetase</shortName>
        <shortName evidence="1">CTPS</shortName>
    </alternativeName>
    <alternativeName>
        <fullName evidence="1">UTP--ammonia ligase</fullName>
    </alternativeName>
</protein>